<reference key="1">
    <citation type="journal article" date="2009" name="PLoS ONE">
        <title>Non mycobacterial virulence genes in the genome of the emerging pathogen Mycobacterium abscessus.</title>
        <authorList>
            <person name="Ripoll F."/>
            <person name="Pasek S."/>
            <person name="Schenowitz C."/>
            <person name="Dossat C."/>
            <person name="Barbe V."/>
            <person name="Rottman M."/>
            <person name="Macheras E."/>
            <person name="Heym B."/>
            <person name="Herrmann J.L."/>
            <person name="Daffe M."/>
            <person name="Brosch R."/>
            <person name="Risler J.L."/>
            <person name="Gaillard J.L."/>
        </authorList>
    </citation>
    <scope>NUCLEOTIDE SEQUENCE [LARGE SCALE GENOMIC DNA]</scope>
    <source>
        <strain>ATCC 19977 / DSM 44196 / CCUG 20993 / CIP 104536 / JCM 13569 / NCTC 13031 / TMC 1543 / L948</strain>
    </source>
</reference>
<organism>
    <name type="scientific">Mycobacteroides abscessus (strain ATCC 19977 / DSM 44196 / CCUG 20993 / CIP 104536 / JCM 13569 / NCTC 13031 / TMC 1543 / L948)</name>
    <name type="common">Mycobacterium abscessus</name>
    <dbReference type="NCBI Taxonomy" id="561007"/>
    <lineage>
        <taxon>Bacteria</taxon>
        <taxon>Bacillati</taxon>
        <taxon>Actinomycetota</taxon>
        <taxon>Actinomycetes</taxon>
        <taxon>Mycobacteriales</taxon>
        <taxon>Mycobacteriaceae</taxon>
        <taxon>Mycobacteroides</taxon>
        <taxon>Mycobacteroides abscessus</taxon>
    </lineage>
</organism>
<accession>B1MH79</accession>
<sequence>MARRDGDSWEITESVGTTALGVASARDAETRSPNPLISDPYAGHFLAAAGDGAWNAYRFDGEPPAALVEAEPRLVERIDAMRSYVACRTKFFDDFFGDASTSGIRQAVILASGLDARAWRLDWPRDAVLFELDLPRVLAFKAETLDKQGATPRIRHVPVAVDLRDDWPAALRAGGFDVGRPAAWIAEGLLPYLPPAAQDLLFERIDTLSAPGSRIAVENFGEDFFNPETLARQRERGQAFRRVAEEMQGQDIPDVADLWYLEERTDAGEFLAGRGWRVTSETAVALLGRHGRDIPADLPDATPNSAFLFAQKAD</sequence>
<name>Y3886_MYCA9</name>
<keyword id="KW-0489">Methyltransferase</keyword>
<keyword id="KW-1185">Reference proteome</keyword>
<keyword id="KW-0949">S-adenosyl-L-methionine</keyword>
<keyword id="KW-0808">Transferase</keyword>
<feature type="chain" id="PRO_0000361122" description="Putative S-adenosyl-L-methionine-dependent methyltransferase MAB_3886c">
    <location>
        <begin position="1"/>
        <end position="314"/>
    </location>
</feature>
<feature type="binding site" evidence="1">
    <location>
        <position position="133"/>
    </location>
    <ligand>
        <name>S-adenosyl-L-methionine</name>
        <dbReference type="ChEBI" id="CHEBI:59789"/>
    </ligand>
</feature>
<feature type="binding site" evidence="1">
    <location>
        <begin position="162"/>
        <end position="163"/>
    </location>
    <ligand>
        <name>S-adenosyl-L-methionine</name>
        <dbReference type="ChEBI" id="CHEBI:59789"/>
    </ligand>
</feature>
<proteinExistence type="inferred from homology"/>
<comment type="function">
    <text evidence="1">Exhibits S-adenosyl-L-methionine-dependent methyltransferase activity.</text>
</comment>
<comment type="similarity">
    <text evidence="2">Belongs to the UPF0677 family.</text>
</comment>
<gene>
    <name type="ordered locus">MAB_3886c</name>
</gene>
<protein>
    <recommendedName>
        <fullName>Putative S-adenosyl-L-methionine-dependent methyltransferase MAB_3886c</fullName>
        <ecNumber>2.1.1.-</ecNumber>
    </recommendedName>
</protein>
<dbReference type="EC" id="2.1.1.-"/>
<dbReference type="EMBL" id="CU458896">
    <property type="protein sequence ID" value="CAM63960.1"/>
    <property type="molecule type" value="Genomic_DNA"/>
</dbReference>
<dbReference type="RefSeq" id="WP_005112081.1">
    <property type="nucleotide sequence ID" value="NZ_MLCG01000001.1"/>
</dbReference>
<dbReference type="SMR" id="B1MH79"/>
<dbReference type="GeneID" id="93380824"/>
<dbReference type="KEGG" id="mab:MAB_3886c"/>
<dbReference type="Proteomes" id="UP000007137">
    <property type="component" value="Chromosome"/>
</dbReference>
<dbReference type="GO" id="GO:0008168">
    <property type="term" value="F:methyltransferase activity"/>
    <property type="evidence" value="ECO:0007669"/>
    <property type="project" value="UniProtKB-KW"/>
</dbReference>
<dbReference type="GO" id="GO:0032259">
    <property type="term" value="P:methylation"/>
    <property type="evidence" value="ECO:0007669"/>
    <property type="project" value="UniProtKB-KW"/>
</dbReference>
<dbReference type="Gene3D" id="3.40.50.150">
    <property type="entry name" value="Vaccinia Virus protein VP39"/>
    <property type="match status" value="1"/>
</dbReference>
<dbReference type="InterPro" id="IPR007213">
    <property type="entry name" value="Ppm1/Ppm2/Tcmp"/>
</dbReference>
<dbReference type="InterPro" id="IPR029063">
    <property type="entry name" value="SAM-dependent_MTases_sf"/>
</dbReference>
<dbReference type="InterPro" id="IPR011610">
    <property type="entry name" value="SAM_mthyl_Trfase_ML2640-like"/>
</dbReference>
<dbReference type="NCBIfam" id="TIGR00027">
    <property type="entry name" value="mthyl_TIGR00027"/>
    <property type="match status" value="1"/>
</dbReference>
<dbReference type="PANTHER" id="PTHR43619">
    <property type="entry name" value="S-ADENOSYL-L-METHIONINE-DEPENDENT METHYLTRANSFERASE YKTD-RELATED"/>
    <property type="match status" value="1"/>
</dbReference>
<dbReference type="PANTHER" id="PTHR43619:SF2">
    <property type="entry name" value="S-ADENOSYL-L-METHIONINE-DEPENDENT METHYLTRANSFERASES SUPERFAMILY PROTEIN"/>
    <property type="match status" value="1"/>
</dbReference>
<dbReference type="Pfam" id="PF04072">
    <property type="entry name" value="LCM"/>
    <property type="match status" value="1"/>
</dbReference>
<dbReference type="SUPFAM" id="SSF53335">
    <property type="entry name" value="S-adenosyl-L-methionine-dependent methyltransferases"/>
    <property type="match status" value="1"/>
</dbReference>
<evidence type="ECO:0000250" key="1"/>
<evidence type="ECO:0000305" key="2"/>